<evidence type="ECO:0000255" key="1">
    <source>
        <dbReference type="HAMAP-Rule" id="MF_00645"/>
    </source>
</evidence>
<reference key="1">
    <citation type="journal article" date="2005" name="J. Bacteriol.">
        <title>The genome of Sulfolobus acidocaldarius, a model organism of the Crenarchaeota.</title>
        <authorList>
            <person name="Chen L."/>
            <person name="Bruegger K."/>
            <person name="Skovgaard M."/>
            <person name="Redder P."/>
            <person name="She Q."/>
            <person name="Torarinsson E."/>
            <person name="Greve B."/>
            <person name="Awayez M."/>
            <person name="Zibat A."/>
            <person name="Klenk H.-P."/>
            <person name="Garrett R.A."/>
        </authorList>
    </citation>
    <scope>NUCLEOTIDE SEQUENCE [LARGE SCALE GENOMIC DNA]</scope>
    <source>
        <strain>ATCC 33909 / DSM 639 / JCM 8929 / NBRC 15157 / NCIMB 11770</strain>
    </source>
</reference>
<accession>Q4JAL7</accession>
<sequence>MSLEQLVTINDLNVDIGKQLIKIARDSIKNRFKLVNLNLDEYKNPVLNKRGLAFVTIEKIEDERTSLRGCIGYVEAVAPLKEIVSKAAVAAAFSDPRFPPLSKSELNDILIEVTILTKPEEISVKDRWKLPSFINVGEDGLIVEYGIMYSGLLLPQVASEYCWDSETFLAETCIKAGLKPDCWLNERVKIKKFNGLIYREINKNTDEIIVLRPSDIKCKKSQHSNLQ</sequence>
<organism>
    <name type="scientific">Sulfolobus acidocaldarius (strain ATCC 33909 / DSM 639 / JCM 8929 / NBRC 15157 / NCIMB 11770)</name>
    <dbReference type="NCBI Taxonomy" id="330779"/>
    <lineage>
        <taxon>Archaea</taxon>
        <taxon>Thermoproteota</taxon>
        <taxon>Thermoprotei</taxon>
        <taxon>Sulfolobales</taxon>
        <taxon>Sulfolobaceae</taxon>
        <taxon>Sulfolobus</taxon>
    </lineage>
</organism>
<gene>
    <name type="ordered locus">Saci_0792</name>
</gene>
<keyword id="KW-1185">Reference proteome</keyword>
<protein>
    <recommendedName>
        <fullName evidence="1">Protein Saci_0792</fullName>
    </recommendedName>
</protein>
<name>Y792_SULAC</name>
<feature type="chain" id="PRO_0000142387" description="Protein Saci_0792">
    <location>
        <begin position="1"/>
        <end position="227"/>
    </location>
</feature>
<feature type="domain" description="AMMECR1" evidence="1">
    <location>
        <begin position="15"/>
        <end position="209"/>
    </location>
</feature>
<dbReference type="EMBL" id="CP000077">
    <property type="protein sequence ID" value="AAY80162.1"/>
    <property type="molecule type" value="Genomic_DNA"/>
</dbReference>
<dbReference type="RefSeq" id="WP_011277664.1">
    <property type="nucleotide sequence ID" value="NC_007181.1"/>
</dbReference>
<dbReference type="SMR" id="Q4JAL7"/>
<dbReference type="STRING" id="330779.Saci_0792"/>
<dbReference type="GeneID" id="14551307"/>
<dbReference type="KEGG" id="sai:Saci_0792"/>
<dbReference type="PATRIC" id="fig|330779.12.peg.759"/>
<dbReference type="eggNOG" id="arCOG01336">
    <property type="taxonomic scope" value="Archaea"/>
</dbReference>
<dbReference type="HOGENOM" id="CLU_095686_1_1_2"/>
<dbReference type="Proteomes" id="UP000001018">
    <property type="component" value="Chromosome"/>
</dbReference>
<dbReference type="Gene3D" id="3.30.700.20">
    <property type="entry name" value="Hypothetical protein ph0010, domain 1"/>
    <property type="match status" value="1"/>
</dbReference>
<dbReference type="Gene3D" id="3.30.1490.150">
    <property type="entry name" value="Hypothetical protein ph0010, domain 2"/>
    <property type="match status" value="1"/>
</dbReference>
<dbReference type="HAMAP" id="MF_00645">
    <property type="entry name" value="AMMECR1"/>
    <property type="match status" value="1"/>
</dbReference>
<dbReference type="InterPro" id="IPR023473">
    <property type="entry name" value="AMMECR1"/>
</dbReference>
<dbReference type="InterPro" id="IPR036071">
    <property type="entry name" value="AMMECR1_dom_sf"/>
</dbReference>
<dbReference type="InterPro" id="IPR002733">
    <property type="entry name" value="AMMECR1_domain"/>
</dbReference>
<dbReference type="InterPro" id="IPR027485">
    <property type="entry name" value="AMMECR1_N"/>
</dbReference>
<dbReference type="InterPro" id="IPR027623">
    <property type="entry name" value="AmmeMemoSam_A"/>
</dbReference>
<dbReference type="InterPro" id="IPR023472">
    <property type="entry name" value="Uncharacterised_MJ0810"/>
</dbReference>
<dbReference type="NCBIfam" id="TIGR04335">
    <property type="entry name" value="AmmeMemoSam_A"/>
    <property type="match status" value="1"/>
</dbReference>
<dbReference type="NCBIfam" id="TIGR00296">
    <property type="entry name" value="TIGR00296 family protein"/>
    <property type="match status" value="1"/>
</dbReference>
<dbReference type="PANTHER" id="PTHR13016:SF0">
    <property type="entry name" value="AMME SYNDROME CANDIDATE GENE 1 PROTEIN"/>
    <property type="match status" value="1"/>
</dbReference>
<dbReference type="PANTHER" id="PTHR13016">
    <property type="entry name" value="AMMECR1 HOMOLOG"/>
    <property type="match status" value="1"/>
</dbReference>
<dbReference type="Pfam" id="PF01871">
    <property type="entry name" value="AMMECR1"/>
    <property type="match status" value="1"/>
</dbReference>
<dbReference type="SUPFAM" id="SSF143447">
    <property type="entry name" value="AMMECR1-like"/>
    <property type="match status" value="1"/>
</dbReference>
<dbReference type="PROSITE" id="PS51112">
    <property type="entry name" value="AMMECR1"/>
    <property type="match status" value="1"/>
</dbReference>
<proteinExistence type="inferred from homology"/>